<gene>
    <name evidence="1" type="primary">frr</name>
    <name type="ordered locus">SPAB_00281</name>
</gene>
<comment type="function">
    <text evidence="1">Responsible for the release of ribosomes from messenger RNA at the termination of protein biosynthesis. May increase the efficiency of translation by recycling ribosomes from one round of translation to another.</text>
</comment>
<comment type="subcellular location">
    <subcellularLocation>
        <location evidence="1">Cytoplasm</location>
    </subcellularLocation>
</comment>
<comment type="similarity">
    <text evidence="1">Belongs to the RRF family.</text>
</comment>
<protein>
    <recommendedName>
        <fullName evidence="1">Ribosome-recycling factor</fullName>
        <shortName evidence="1">RRF</shortName>
    </recommendedName>
    <alternativeName>
        <fullName evidence="1">Ribosome-releasing factor</fullName>
    </alternativeName>
</protein>
<sequence length="185" mass="20556">MISDIRKDAEVRMEKCVEAFKTQISKVRTGRASPSLLDGIVVEYYGTPTPLRQLASVTVEDSRTLKINVFDRSMGPAVEKAIMASDLGLNPSSAGTDIRVPLPPLTEERRKDLTKIVRGEAEQARVAVRNVRRDANDKVKALLKDKAISEDDDRRSQEEVQKMTDAAIKKVDAALADKEAELMQF</sequence>
<dbReference type="EMBL" id="CP000886">
    <property type="protein sequence ID" value="ABX65722.1"/>
    <property type="molecule type" value="Genomic_DNA"/>
</dbReference>
<dbReference type="RefSeq" id="WP_000622423.1">
    <property type="nucleotide sequence ID" value="NC_010102.1"/>
</dbReference>
<dbReference type="SMR" id="A9N0S0"/>
<dbReference type="KEGG" id="spq:SPAB_00281"/>
<dbReference type="PATRIC" id="fig|1016998.12.peg.270"/>
<dbReference type="HOGENOM" id="CLU_073981_2_1_6"/>
<dbReference type="BioCyc" id="SENT1016998:SPAB_RS01135-MONOMER"/>
<dbReference type="Proteomes" id="UP000008556">
    <property type="component" value="Chromosome"/>
</dbReference>
<dbReference type="GO" id="GO:0005829">
    <property type="term" value="C:cytosol"/>
    <property type="evidence" value="ECO:0007669"/>
    <property type="project" value="GOC"/>
</dbReference>
<dbReference type="GO" id="GO:0043023">
    <property type="term" value="F:ribosomal large subunit binding"/>
    <property type="evidence" value="ECO:0007669"/>
    <property type="project" value="TreeGrafter"/>
</dbReference>
<dbReference type="GO" id="GO:0002184">
    <property type="term" value="P:cytoplasmic translational termination"/>
    <property type="evidence" value="ECO:0007669"/>
    <property type="project" value="TreeGrafter"/>
</dbReference>
<dbReference type="CDD" id="cd00520">
    <property type="entry name" value="RRF"/>
    <property type="match status" value="1"/>
</dbReference>
<dbReference type="FunFam" id="1.10.132.20:FF:000001">
    <property type="entry name" value="Ribosome-recycling factor"/>
    <property type="match status" value="1"/>
</dbReference>
<dbReference type="FunFam" id="3.30.1360.40:FF:000001">
    <property type="entry name" value="Ribosome-recycling factor"/>
    <property type="match status" value="1"/>
</dbReference>
<dbReference type="Gene3D" id="3.30.1360.40">
    <property type="match status" value="1"/>
</dbReference>
<dbReference type="Gene3D" id="1.10.132.20">
    <property type="entry name" value="Ribosome-recycling factor"/>
    <property type="match status" value="1"/>
</dbReference>
<dbReference type="HAMAP" id="MF_00040">
    <property type="entry name" value="RRF"/>
    <property type="match status" value="1"/>
</dbReference>
<dbReference type="InterPro" id="IPR002661">
    <property type="entry name" value="Ribosome_recyc_fac"/>
</dbReference>
<dbReference type="InterPro" id="IPR023584">
    <property type="entry name" value="Ribosome_recyc_fac_dom"/>
</dbReference>
<dbReference type="InterPro" id="IPR036191">
    <property type="entry name" value="RRF_sf"/>
</dbReference>
<dbReference type="NCBIfam" id="TIGR00496">
    <property type="entry name" value="frr"/>
    <property type="match status" value="1"/>
</dbReference>
<dbReference type="PANTHER" id="PTHR20982:SF3">
    <property type="entry name" value="MITOCHONDRIAL RIBOSOME RECYCLING FACTOR PSEUDO 1"/>
    <property type="match status" value="1"/>
</dbReference>
<dbReference type="PANTHER" id="PTHR20982">
    <property type="entry name" value="RIBOSOME RECYCLING FACTOR"/>
    <property type="match status" value="1"/>
</dbReference>
<dbReference type="Pfam" id="PF01765">
    <property type="entry name" value="RRF"/>
    <property type="match status" value="1"/>
</dbReference>
<dbReference type="SUPFAM" id="SSF55194">
    <property type="entry name" value="Ribosome recycling factor, RRF"/>
    <property type="match status" value="1"/>
</dbReference>
<reference key="1">
    <citation type="submission" date="2007-11" db="EMBL/GenBank/DDBJ databases">
        <authorList>
            <consortium name="The Salmonella enterica serovar Paratyphi B Genome Sequencing Project"/>
            <person name="McClelland M."/>
            <person name="Sanderson E.K."/>
            <person name="Porwollik S."/>
            <person name="Spieth J."/>
            <person name="Clifton W.S."/>
            <person name="Fulton R."/>
            <person name="Cordes M."/>
            <person name="Wollam A."/>
            <person name="Shah N."/>
            <person name="Pepin K."/>
            <person name="Bhonagiri V."/>
            <person name="Nash W."/>
            <person name="Johnson M."/>
            <person name="Thiruvilangam P."/>
            <person name="Wilson R."/>
        </authorList>
    </citation>
    <scope>NUCLEOTIDE SEQUENCE [LARGE SCALE GENOMIC DNA]</scope>
    <source>
        <strain>ATCC BAA-1250 / SPB7</strain>
    </source>
</reference>
<organism>
    <name type="scientific">Salmonella paratyphi B (strain ATCC BAA-1250 / SPB7)</name>
    <dbReference type="NCBI Taxonomy" id="1016998"/>
    <lineage>
        <taxon>Bacteria</taxon>
        <taxon>Pseudomonadati</taxon>
        <taxon>Pseudomonadota</taxon>
        <taxon>Gammaproteobacteria</taxon>
        <taxon>Enterobacterales</taxon>
        <taxon>Enterobacteriaceae</taxon>
        <taxon>Salmonella</taxon>
    </lineage>
</organism>
<feature type="chain" id="PRO_1000074598" description="Ribosome-recycling factor">
    <location>
        <begin position="1"/>
        <end position="185"/>
    </location>
</feature>
<accession>A9N0S0</accession>
<evidence type="ECO:0000255" key="1">
    <source>
        <dbReference type="HAMAP-Rule" id="MF_00040"/>
    </source>
</evidence>
<keyword id="KW-0963">Cytoplasm</keyword>
<keyword id="KW-0648">Protein biosynthesis</keyword>
<proteinExistence type="inferred from homology"/>
<name>RRF_SALPB</name>